<keyword id="KW-0472">Membrane</keyword>
<keyword id="KW-1185">Reference proteome</keyword>
<keyword id="KW-0812">Transmembrane</keyword>
<keyword id="KW-1133">Transmembrane helix</keyword>
<reference key="1">
    <citation type="journal article" date="2010" name="Plant Cell">
        <title>Cell Number Regulator1 affects plant and organ size in maize: implications for crop yield enhancement and heterosis.</title>
        <authorList>
            <person name="Guo M."/>
            <person name="Rupe M.A."/>
            <person name="Dieter J.A."/>
            <person name="Zou J."/>
            <person name="Spielbauer D."/>
            <person name="Duncan K.E."/>
            <person name="Howard R.J."/>
            <person name="Hou Z."/>
            <person name="Simmons C.R."/>
        </authorList>
    </citation>
    <scope>NUCLEOTIDE SEQUENCE [MRNA]</scope>
    <scope>TISSUE SPECIFICITY</scope>
    <scope>GENE FAMILY</scope>
    <scope>NOMENCLATURE</scope>
    <source>
        <strain>cv. B73</strain>
    </source>
</reference>
<reference key="2">
    <citation type="journal article" date="2009" name="Plant Mol. Biol.">
        <title>Insights into corn genes derived from large-scale cDNA sequencing.</title>
        <authorList>
            <person name="Alexandrov N.N."/>
            <person name="Brover V.V."/>
            <person name="Freidin S."/>
            <person name="Troukhan M.E."/>
            <person name="Tatarinova T.V."/>
            <person name="Zhang H."/>
            <person name="Swaller T.J."/>
            <person name="Lu Y.-P."/>
            <person name="Bouck J."/>
            <person name="Flavell R.B."/>
            <person name="Feldmann K.A."/>
        </authorList>
    </citation>
    <scope>NUCLEOTIDE SEQUENCE [LARGE SCALE MRNA]</scope>
</reference>
<reference key="3">
    <citation type="submission" date="2009-02" db="EMBL/GenBank/DDBJ databases">
        <title>Maize full-length cDNA project.</title>
        <authorList>
            <person name="Yu Y."/>
            <person name="Currie J."/>
            <person name="Lomeli R."/>
            <person name="Angelova A."/>
            <person name="Collura K."/>
            <person name="Wissotski M."/>
            <person name="Campos D."/>
            <person name="Kudrna D."/>
            <person name="Golser W."/>
            <person name="Ashely E."/>
            <person name="Haller K."/>
            <person name="Descour A."/>
            <person name="Fernandes J."/>
            <person name="Soderlund C."/>
            <person name="Walbot V."/>
        </authorList>
    </citation>
    <scope>NUCLEOTIDE SEQUENCE [LARGE SCALE MRNA]</scope>
    <source>
        <strain>cv. B73</strain>
    </source>
</reference>
<name>CNR13_MAIZE</name>
<comment type="subcellular location">
    <subcellularLocation>
        <location evidence="4">Membrane</location>
        <topology evidence="4">Single-pass membrane protein</topology>
    </subcellularLocation>
</comment>
<comment type="tissue specificity">
    <text evidence="3">Expressed in roots, coleoptiles, leaves, stalks, apical meristems, immature ears, embryos, endosperm, pericarp, silks and tassel spikelets. Not detected in pollen.</text>
</comment>
<dbReference type="EMBL" id="HM008664">
    <property type="protein sequence ID" value="ADI48426.1"/>
    <property type="molecule type" value="mRNA"/>
</dbReference>
<dbReference type="EMBL" id="EU952965">
    <property type="protein sequence ID" value="ACG25083.1"/>
    <property type="molecule type" value="mRNA"/>
</dbReference>
<dbReference type="EMBL" id="BT061824">
    <property type="protein sequence ID" value="ACN26521.1"/>
    <property type="molecule type" value="mRNA"/>
</dbReference>
<dbReference type="RefSeq" id="NP_001182136.1">
    <property type="nucleotide sequence ID" value="NM_001195207.1"/>
</dbReference>
<dbReference type="SMR" id="B6SJQ0"/>
<dbReference type="FunCoup" id="B6SJQ0">
    <property type="interactions" value="2679"/>
</dbReference>
<dbReference type="STRING" id="4577.B6SJQ0"/>
<dbReference type="PaxDb" id="4577-GRMZM2G027821_P01"/>
<dbReference type="GeneID" id="100192784"/>
<dbReference type="KEGG" id="zma:100192784"/>
<dbReference type="eggNOG" id="ENOG502QQIG">
    <property type="taxonomic scope" value="Eukaryota"/>
</dbReference>
<dbReference type="InParanoid" id="B6SJQ0"/>
<dbReference type="OrthoDB" id="1045822at2759"/>
<dbReference type="Proteomes" id="UP000007305">
    <property type="component" value="Unplaced"/>
</dbReference>
<dbReference type="ExpressionAtlas" id="B6SJQ0">
    <property type="expression patterns" value="baseline and differential"/>
</dbReference>
<dbReference type="GO" id="GO:0016020">
    <property type="term" value="C:membrane"/>
    <property type="evidence" value="ECO:0007669"/>
    <property type="project" value="UniProtKB-SubCell"/>
</dbReference>
<dbReference type="GO" id="GO:0007166">
    <property type="term" value="P:cell surface receptor signaling pathway"/>
    <property type="evidence" value="ECO:0007669"/>
    <property type="project" value="InterPro"/>
</dbReference>
<dbReference type="CDD" id="cd21037">
    <property type="entry name" value="MLKL_NTD"/>
    <property type="match status" value="1"/>
</dbReference>
<dbReference type="FunFam" id="1.20.930.20:FF:000003">
    <property type="entry name" value="DNA mismatch repair protein MLH1"/>
    <property type="match status" value="1"/>
</dbReference>
<dbReference type="Gene3D" id="1.20.930.20">
    <property type="entry name" value="Adaptor protein Cbl, N-terminal domain"/>
    <property type="match status" value="1"/>
</dbReference>
<dbReference type="InterPro" id="IPR036537">
    <property type="entry name" value="Adaptor_Cbl_N_dom_sf"/>
</dbReference>
<dbReference type="InterPro" id="IPR045766">
    <property type="entry name" value="MCAfunc"/>
</dbReference>
<dbReference type="InterPro" id="IPR006461">
    <property type="entry name" value="PLAC_motif_containing"/>
</dbReference>
<dbReference type="NCBIfam" id="TIGR01571">
    <property type="entry name" value="A_thal_Cys_rich"/>
    <property type="match status" value="1"/>
</dbReference>
<dbReference type="PANTHER" id="PTHR46604">
    <property type="entry name" value="PROTEIN MID1-COMPLEMENTING ACTIVITY 1"/>
    <property type="match status" value="1"/>
</dbReference>
<dbReference type="PANTHER" id="PTHR46604:SF3">
    <property type="entry name" value="PROTEIN MID1-COMPLEMENTING ACTIVITY 1"/>
    <property type="match status" value="1"/>
</dbReference>
<dbReference type="Pfam" id="PF19584">
    <property type="entry name" value="MCAfunc"/>
    <property type="match status" value="1"/>
</dbReference>
<dbReference type="Pfam" id="PF04749">
    <property type="entry name" value="PLAC8"/>
    <property type="match status" value="1"/>
</dbReference>
<evidence type="ECO:0000255" key="1"/>
<evidence type="ECO:0000256" key="2">
    <source>
        <dbReference type="SAM" id="MobiDB-lite"/>
    </source>
</evidence>
<evidence type="ECO:0000269" key="3">
    <source>
    </source>
</evidence>
<evidence type="ECO:0000305" key="4"/>
<accession>B6SJQ0</accession>
<accession>C0HHL8</accession>
<protein>
    <recommendedName>
        <fullName>Cell number regulator 13</fullName>
    </recommendedName>
    <alternativeName>
        <fullName>ZmCNR13</fullName>
    </alternativeName>
</protein>
<gene>
    <name type="primary">CNR13</name>
</gene>
<organism>
    <name type="scientific">Zea mays</name>
    <name type="common">Maize</name>
    <dbReference type="NCBI Taxonomy" id="4577"/>
    <lineage>
        <taxon>Eukaryota</taxon>
        <taxon>Viridiplantae</taxon>
        <taxon>Streptophyta</taxon>
        <taxon>Embryophyta</taxon>
        <taxon>Tracheophyta</taxon>
        <taxon>Spermatophyta</taxon>
        <taxon>Magnoliopsida</taxon>
        <taxon>Liliopsida</taxon>
        <taxon>Poales</taxon>
        <taxon>Poaceae</taxon>
        <taxon>PACMAD clade</taxon>
        <taxon>Panicoideae</taxon>
        <taxon>Andropogonodae</taxon>
        <taxon>Andropogoneae</taxon>
        <taxon>Tripsacinae</taxon>
        <taxon>Zea</taxon>
    </lineage>
</organism>
<feature type="chain" id="PRO_0000407740" description="Cell number regulator 13">
    <location>
        <begin position="1"/>
        <end position="428"/>
    </location>
</feature>
<feature type="transmembrane region" description="Helical" evidence="1">
    <location>
        <begin position="354"/>
        <end position="370"/>
    </location>
</feature>
<feature type="region of interest" description="Disordered" evidence="2">
    <location>
        <begin position="233"/>
        <end position="290"/>
    </location>
</feature>
<feature type="compositionally biased region" description="Basic and acidic residues" evidence="2">
    <location>
        <begin position="233"/>
        <end position="280"/>
    </location>
</feature>
<feature type="compositionally biased region" description="Polar residues" evidence="2">
    <location>
        <begin position="281"/>
        <end position="290"/>
    </location>
</feature>
<feature type="sequence conflict" description="In Ref. 3; ACN26521." evidence="4" ref="3">
    <original>T</original>
    <variation>S</variation>
    <location>
        <position position="169"/>
    </location>
</feature>
<feature type="sequence conflict" description="In Ref. 3; ACN26521." evidence="4" ref="3">
    <original>G</original>
    <variation>D</variation>
    <location>
        <position position="272"/>
    </location>
</feature>
<feature type="sequence conflict" description="In Ref. 3; ACN26521." evidence="4" ref="3">
    <original>D</original>
    <variation>E</variation>
    <location>
        <position position="280"/>
    </location>
</feature>
<feature type="sequence conflict" description="In Ref. 3; ACN26521." evidence="4" ref="3">
    <original>K</original>
    <variation>E</variation>
    <location>
        <position position="318"/>
    </location>
</feature>
<sequence>MASWDNLGELSNIAQLTGLDAVKLISLIVRAASTARLHKRNCRRFAQHLKLIGGLLEQLRVSELRKYPETREPLEQLEDALRRGYLLVNSCQDRSYLYLLAMGWNIVYQFRKAQSEIDNYLRLVPLITLVDNARIRDRLEYIERDQCEYSFDEEDKKVQDALLNPDPCTNPTIVLKKTLSCSYPNLPFNEALRKESEKLQVELQRSQSNMDLGSCEVIQHLLGVTKTVESTIPEKETNVKAPEKKGSNYSESKGETAKSFDDDDDYPKKQNGDYPKKQKDTCSTQRCSSQVPYGHDLVSSRGSYSDEWHADLLGCCSKPALCLKTLFFPCGTFSRIASIAKDRPMSSGEACNDIMAYSLILSCCCYTCCVRRKLRQKLDIAGGCCDDFLSHLLCCCCALVQEWREVEIRGAYSEKTKVTPPACQYMEH</sequence>
<proteinExistence type="evidence at transcript level"/>